<sequence length="217" mass="24427">MIQLPDEINLIIVLSLLTLLPLISVMATSFVKFAVVFSLLRNALGVQQIPPNMAMYGLAIILSLYVMAPVGFATQDYLQANEVSLTNIESVEKFFDEGLAPYRMFLKQHIQAQEYSFFVDSTKQLWPKQYADRLESDSLFILLPAFTVSELTRAFEIGFLIYLPFIVIDLVISNILLAMGMMMVSPMTISLPFKLLLFVLLDGWTRLTHGLVISYGG</sequence>
<feature type="chain" id="PRO_0000192000" description="Yop proteins translocation protein R">
    <location>
        <begin position="1"/>
        <end position="217"/>
    </location>
</feature>
<feature type="transmembrane region" description="Helical" evidence="1">
    <location>
        <begin position="11"/>
        <end position="31"/>
    </location>
</feature>
<feature type="transmembrane region" description="Helical" evidence="1">
    <location>
        <begin position="53"/>
        <end position="73"/>
    </location>
</feature>
<feature type="transmembrane region" description="Helical" evidence="1">
    <location>
        <begin position="157"/>
        <end position="177"/>
    </location>
</feature>
<feature type="transmembrane region" description="Helical" evidence="1">
    <location>
        <begin position="181"/>
        <end position="201"/>
    </location>
</feature>
<name>YSCR_YERPE</name>
<evidence type="ECO:0000255" key="1"/>
<evidence type="ECO:0000305" key="2"/>
<organism>
    <name type="scientific">Yersinia pestis</name>
    <dbReference type="NCBI Taxonomy" id="632"/>
    <lineage>
        <taxon>Bacteria</taxon>
        <taxon>Pseudomonadati</taxon>
        <taxon>Pseudomonadota</taxon>
        <taxon>Gammaproteobacteria</taxon>
        <taxon>Enterobacterales</taxon>
        <taxon>Yersiniaceae</taxon>
        <taxon>Yersinia</taxon>
    </lineage>
</organism>
<keyword id="KW-1003">Cell membrane</keyword>
<keyword id="KW-0472">Membrane</keyword>
<keyword id="KW-0614">Plasmid</keyword>
<keyword id="KW-1185">Reference proteome</keyword>
<keyword id="KW-0812">Transmembrane</keyword>
<keyword id="KW-1133">Transmembrane helix</keyword>
<keyword id="KW-0843">Virulence</keyword>
<proteinExistence type="inferred from homology"/>
<accession>P69980</accession>
<accession>P40297</accession>
<accession>P42714</accession>
<accession>Q663J5</accession>
<geneLocation type="plasmid">
    <name>pCD1</name>
</geneLocation>
<protein>
    <recommendedName>
        <fullName>Yop proteins translocation protein R</fullName>
    </recommendedName>
</protein>
<dbReference type="EMBL" id="AF020214">
    <property type="protein sequence ID" value="AAB72201.1"/>
    <property type="molecule type" value="Genomic_DNA"/>
</dbReference>
<dbReference type="EMBL" id="AF074612">
    <property type="protein sequence ID" value="AAC69787.1"/>
    <property type="molecule type" value="Genomic_DNA"/>
</dbReference>
<dbReference type="EMBL" id="AF053946">
    <property type="protein sequence ID" value="AAC62560.1"/>
    <property type="molecule type" value="Genomic_DNA"/>
</dbReference>
<dbReference type="EMBL" id="AL117189">
    <property type="protein sequence ID" value="CAB54921.1"/>
    <property type="molecule type" value="Genomic_DNA"/>
</dbReference>
<dbReference type="EMBL" id="AE017043">
    <property type="protein sequence ID" value="AAS58558.1"/>
    <property type="molecule type" value="Genomic_DNA"/>
</dbReference>
<dbReference type="PIR" id="B36955">
    <property type="entry name" value="B36955"/>
</dbReference>
<dbReference type="RefSeq" id="NP_395178.1">
    <property type="nucleotide sequence ID" value="NC_003131.1"/>
</dbReference>
<dbReference type="RefSeq" id="NP_857738.1">
    <property type="nucleotide sequence ID" value="NC_004836.1"/>
</dbReference>
<dbReference type="RefSeq" id="NP_857933.1">
    <property type="nucleotide sequence ID" value="NC_004839.1"/>
</dbReference>
<dbReference type="RefSeq" id="WP_002212947.1">
    <property type="nucleotide sequence ID" value="NZ_WUCM01000070.1"/>
</dbReference>
<dbReference type="SMR" id="P69980"/>
<dbReference type="IntAct" id="P69980">
    <property type="interactions" value="4"/>
</dbReference>
<dbReference type="PaxDb" id="214092-5832464"/>
<dbReference type="DNASU" id="1149297"/>
<dbReference type="EnsemblBacteria" id="AAS58558">
    <property type="protein sequence ID" value="AAS58558"/>
    <property type="gene ID" value="YP_pCD39"/>
</dbReference>
<dbReference type="KEGG" id="ype:YPCD1.44"/>
<dbReference type="KEGG" id="ypm:YP_pCD39"/>
<dbReference type="PATRIC" id="fig|214092.21.peg.55"/>
<dbReference type="eggNOG" id="COG4790">
    <property type="taxonomic scope" value="Bacteria"/>
</dbReference>
<dbReference type="HOGENOM" id="CLU_042028_2_0_6"/>
<dbReference type="OMA" id="IMITCFP"/>
<dbReference type="OrthoDB" id="9805111at2"/>
<dbReference type="Proteomes" id="UP000000815">
    <property type="component" value="Plasmid pCD1"/>
</dbReference>
<dbReference type="Proteomes" id="UP000001019">
    <property type="component" value="Plasmid pCD1"/>
</dbReference>
<dbReference type="GO" id="GO:0005886">
    <property type="term" value="C:plasma membrane"/>
    <property type="evidence" value="ECO:0000318"/>
    <property type="project" value="GO_Central"/>
</dbReference>
<dbReference type="GO" id="GO:0044780">
    <property type="term" value="P:bacterial-type flagellum assembly"/>
    <property type="evidence" value="ECO:0000318"/>
    <property type="project" value="GO_Central"/>
</dbReference>
<dbReference type="GO" id="GO:0071978">
    <property type="term" value="P:bacterial-type flagellum-dependent swarming motility"/>
    <property type="evidence" value="ECO:0000318"/>
    <property type="project" value="GO_Central"/>
</dbReference>
<dbReference type="GO" id="GO:0009306">
    <property type="term" value="P:protein secretion"/>
    <property type="evidence" value="ECO:0007669"/>
    <property type="project" value="InterPro"/>
</dbReference>
<dbReference type="InterPro" id="IPR005838">
    <property type="entry name" value="T3SS_IM_P"/>
</dbReference>
<dbReference type="InterPro" id="IPR005773">
    <property type="entry name" value="T3SS_YscR-like"/>
</dbReference>
<dbReference type="NCBIfam" id="NF009438">
    <property type="entry name" value="PRK12797.1"/>
    <property type="match status" value="1"/>
</dbReference>
<dbReference type="NCBIfam" id="TIGR01102">
    <property type="entry name" value="yscR"/>
    <property type="match status" value="1"/>
</dbReference>
<dbReference type="PANTHER" id="PTHR30587">
    <property type="entry name" value="FLAGELLAR BIOSYNTHETIC PROTEIN FLIP"/>
    <property type="match status" value="1"/>
</dbReference>
<dbReference type="PANTHER" id="PTHR30587:SF2">
    <property type="entry name" value="SURFACE PRESENTATION OF ANTIGENS PROTEIN SPAP"/>
    <property type="match status" value="1"/>
</dbReference>
<dbReference type="Pfam" id="PF00813">
    <property type="entry name" value="FliP"/>
    <property type="match status" value="1"/>
</dbReference>
<dbReference type="PRINTS" id="PR01302">
    <property type="entry name" value="TYPE3IMPPROT"/>
</dbReference>
<dbReference type="PROSITE" id="PS01060">
    <property type="entry name" value="FLIP_1"/>
    <property type="match status" value="1"/>
</dbReference>
<dbReference type="PROSITE" id="PS01061">
    <property type="entry name" value="FLIP_2"/>
    <property type="match status" value="1"/>
</dbReference>
<reference key="1">
    <citation type="journal article" date="1994" name="J. Bacteriol.">
        <title>A low-Ca2+ response (LCR) secretion (ysc) locus lies within the lcrB region of the LCR plasmid in Yersinia pestis.</title>
        <authorList>
            <person name="Fields K.A."/>
            <person name="Plano G.V."/>
            <person name="Straley S.C."/>
        </authorList>
    </citation>
    <scope>NUCLEOTIDE SEQUENCE [GENOMIC DNA]</scope>
    <source>
        <strain>KIM5 / Biovar Mediaevalis</strain>
    </source>
</reference>
<reference key="2">
    <citation type="journal article" date="1998" name="Infect. Immun.">
        <title>DNA sequencing and analysis of the low-Ca2+-response plasmid pCD1 of Yersinia pestis KIM5.</title>
        <authorList>
            <person name="Perry R.D."/>
            <person name="Straley S.C."/>
            <person name="Fetherston J.D."/>
            <person name="Rose D.J."/>
            <person name="Gregor J."/>
            <person name="Blattner F.R."/>
        </authorList>
    </citation>
    <scope>NUCLEOTIDE SEQUENCE [GENOMIC DNA]</scope>
    <source>
        <strain>KIM5 / Biovar Mediaevalis</strain>
    </source>
</reference>
<reference key="3">
    <citation type="journal article" date="1998" name="J. Bacteriol.">
        <title>Structural organization of virulence-associated plasmids of Yersinia pestis.</title>
        <authorList>
            <person name="Hu P."/>
            <person name="Elliott J."/>
            <person name="McCready P."/>
            <person name="Skowronski E."/>
            <person name="Garnes J."/>
            <person name="Kobayashi A."/>
            <person name="Brubaker R.R."/>
            <person name="Garcia E."/>
        </authorList>
    </citation>
    <scope>NUCLEOTIDE SEQUENCE [GENOMIC DNA]</scope>
    <source>
        <strain>KIM5 / Biovar Mediaevalis</strain>
    </source>
</reference>
<reference key="4">
    <citation type="journal article" date="2001" name="Nature">
        <title>Genome sequence of Yersinia pestis, the causative agent of plague.</title>
        <authorList>
            <person name="Parkhill J."/>
            <person name="Wren B.W."/>
            <person name="Thomson N.R."/>
            <person name="Titball R.W."/>
            <person name="Holden M.T.G."/>
            <person name="Prentice M.B."/>
            <person name="Sebaihia M."/>
            <person name="James K.D."/>
            <person name="Churcher C.M."/>
            <person name="Mungall K.L."/>
            <person name="Baker S."/>
            <person name="Basham D."/>
            <person name="Bentley S.D."/>
            <person name="Brooks K."/>
            <person name="Cerdeno-Tarraga A.-M."/>
            <person name="Chillingworth T."/>
            <person name="Cronin A."/>
            <person name="Davies R.M."/>
            <person name="Davis P."/>
            <person name="Dougan G."/>
            <person name="Feltwell T."/>
            <person name="Hamlin N."/>
            <person name="Holroyd S."/>
            <person name="Jagels K."/>
            <person name="Karlyshev A.V."/>
            <person name="Leather S."/>
            <person name="Moule S."/>
            <person name="Oyston P.C.F."/>
            <person name="Quail M.A."/>
            <person name="Rutherford K.M."/>
            <person name="Simmonds M."/>
            <person name="Skelton J."/>
            <person name="Stevens K."/>
            <person name="Whitehead S."/>
            <person name="Barrell B.G."/>
        </authorList>
    </citation>
    <scope>NUCLEOTIDE SEQUENCE [LARGE SCALE GENOMIC DNA]</scope>
    <source>
        <strain>CO-92 / Biovar Orientalis</strain>
    </source>
</reference>
<reference key="5">
    <citation type="journal article" date="2004" name="DNA Res.">
        <title>Complete genome sequence of Yersinia pestis strain 91001, an isolate avirulent to humans.</title>
        <authorList>
            <person name="Song Y."/>
            <person name="Tong Z."/>
            <person name="Wang J."/>
            <person name="Wang L."/>
            <person name="Guo Z."/>
            <person name="Han Y."/>
            <person name="Zhang J."/>
            <person name="Pei D."/>
            <person name="Zhou D."/>
            <person name="Qin H."/>
            <person name="Pang X."/>
            <person name="Han Y."/>
            <person name="Zhai J."/>
            <person name="Li M."/>
            <person name="Cui B."/>
            <person name="Qi Z."/>
            <person name="Jin L."/>
            <person name="Dai R."/>
            <person name="Chen F."/>
            <person name="Li S."/>
            <person name="Ye C."/>
            <person name="Du Z."/>
            <person name="Lin W."/>
            <person name="Wang J."/>
            <person name="Yu J."/>
            <person name="Yang H."/>
            <person name="Wang J."/>
            <person name="Huang P."/>
            <person name="Yang R."/>
        </authorList>
    </citation>
    <scope>NUCLEOTIDE SEQUENCE [LARGE SCALE GENOMIC DNA]</scope>
    <source>
        <strain>91001 / Biovar Mediaevalis</strain>
    </source>
</reference>
<comment type="function">
    <text>Component of the yop secretion machinery. May have a role in the negative pathway regulation of yop expression controlled by calcium.</text>
</comment>
<comment type="subcellular location">
    <subcellularLocation>
        <location evidence="2">Cell membrane</location>
        <topology evidence="2">Multi-pass membrane protein</topology>
    </subcellularLocation>
</comment>
<comment type="similarity">
    <text evidence="2">Belongs to the FliP/MopC/SpaP family.</text>
</comment>
<gene>
    <name type="primary">yscR</name>
    <name type="ordered locus">YPCD1.44</name>
    <name type="ordered locus">y5034</name>
    <name type="ordered locus">y0037</name>
    <name type="ordered locus">YP_pCD39</name>
</gene>